<organism>
    <name type="scientific">Mus musculus</name>
    <name type="common">Mouse</name>
    <dbReference type="NCBI Taxonomy" id="10090"/>
    <lineage>
        <taxon>Eukaryota</taxon>
        <taxon>Metazoa</taxon>
        <taxon>Chordata</taxon>
        <taxon>Craniata</taxon>
        <taxon>Vertebrata</taxon>
        <taxon>Euteleostomi</taxon>
        <taxon>Mammalia</taxon>
        <taxon>Eutheria</taxon>
        <taxon>Euarchontoglires</taxon>
        <taxon>Glires</taxon>
        <taxon>Rodentia</taxon>
        <taxon>Myomorpha</taxon>
        <taxon>Muroidea</taxon>
        <taxon>Muridae</taxon>
        <taxon>Murinae</taxon>
        <taxon>Mus</taxon>
        <taxon>Mus</taxon>
    </lineage>
</organism>
<accession>P43142</accession>
<reference key="1">
    <citation type="submission" date="1993-06" db="EMBL/GenBank/DDBJ databases">
        <authorList>
            <person name="Saeki Y."/>
            <person name="Ueno S."/>
            <person name="Nagai Y."/>
            <person name="Yanagihara T."/>
        </authorList>
    </citation>
    <scope>NUCLEOTIDE SEQUENCE [MRNA]</scope>
    <source>
        <strain>BALB/cJ</strain>
        <tissue>Brain</tissue>
    </source>
</reference>
<reference key="2">
    <citation type="journal article" date="1993" name="Genomics">
        <title>Identification, chromosomal location, and genome organization of mammalian G-protein-coupled receptors.</title>
        <authorList>
            <person name="Wilkie T.M."/>
            <person name="Chen Y."/>
            <person name="Gilbert D.J."/>
            <person name="Moore K.J."/>
            <person name="Yu L."/>
            <person name="Simon M.I."/>
            <person name="Copeland N.G."/>
            <person name="Jenkins N.A."/>
        </authorList>
    </citation>
    <scope>NUCLEOTIDE SEQUENCE [MRNA] OF 149-262</scope>
    <source>
        <tissue>Testis</tissue>
    </source>
</reference>
<comment type="function">
    <text>Orphan receptor.</text>
</comment>
<comment type="subcellular location">
    <subcellularLocation>
        <location>Cell membrane</location>
        <topology>Multi-pass membrane protein</topology>
    </subcellularLocation>
</comment>
<comment type="tissue specificity">
    <text>Expressed in liver and lung.</text>
</comment>
<comment type="similarity">
    <text evidence="3">Belongs to the G-protein coupled receptor 1 family.</text>
</comment>
<dbReference type="EMBL" id="D17292">
    <property type="protein sequence ID" value="BAA04125.1"/>
    <property type="molecule type" value="mRNA"/>
</dbReference>
<dbReference type="EMBL" id="L20338">
    <property type="protein sequence ID" value="AAA16849.1"/>
    <property type="molecule type" value="mRNA"/>
</dbReference>
<dbReference type="PIR" id="I48909">
    <property type="entry name" value="I48909"/>
</dbReference>
<dbReference type="SMR" id="P43142"/>
<dbReference type="FunCoup" id="P43142">
    <property type="interactions" value="141"/>
</dbReference>
<dbReference type="STRING" id="10090.ENSMUSP00000100882"/>
<dbReference type="GlyCosmos" id="P43142">
    <property type="glycosylation" value="2 sites, No reported glycans"/>
</dbReference>
<dbReference type="GlyGen" id="P43142">
    <property type="glycosylation" value="3 sites"/>
</dbReference>
<dbReference type="iPTMnet" id="P43142"/>
<dbReference type="PhosphoSitePlus" id="P43142"/>
<dbReference type="PaxDb" id="10090-ENSMUSP00000100882"/>
<dbReference type="ProteomicsDB" id="267751"/>
<dbReference type="AGR" id="MGI:109545"/>
<dbReference type="MGI" id="MGI:109545">
    <property type="gene designation" value="Gpr182"/>
</dbReference>
<dbReference type="eggNOG" id="ENOG502QSNU">
    <property type="taxonomic scope" value="Eukaryota"/>
</dbReference>
<dbReference type="InParanoid" id="P43142"/>
<dbReference type="PhylomeDB" id="P43142"/>
<dbReference type="PRO" id="PR:P43142"/>
<dbReference type="Proteomes" id="UP000000589">
    <property type="component" value="Unplaced"/>
</dbReference>
<dbReference type="RNAct" id="P43142">
    <property type="molecule type" value="protein"/>
</dbReference>
<dbReference type="GO" id="GO:0005886">
    <property type="term" value="C:plasma membrane"/>
    <property type="evidence" value="ECO:0007669"/>
    <property type="project" value="UniProtKB-SubCell"/>
</dbReference>
<dbReference type="GO" id="GO:0004930">
    <property type="term" value="F:G protein-coupled receptor activity"/>
    <property type="evidence" value="ECO:0007669"/>
    <property type="project" value="UniProtKB-KW"/>
</dbReference>
<dbReference type="CDD" id="cd14988">
    <property type="entry name" value="7tmA_GPR182"/>
    <property type="match status" value="1"/>
</dbReference>
<dbReference type="Gene3D" id="1.20.1070.10">
    <property type="entry name" value="Rhodopsin 7-helix transmembrane proteins"/>
    <property type="match status" value="1"/>
</dbReference>
<dbReference type="InterPro" id="IPR001350">
    <property type="entry name" value="G10D_rcpt"/>
</dbReference>
<dbReference type="InterPro" id="IPR000276">
    <property type="entry name" value="GPCR_Rhodpsn"/>
</dbReference>
<dbReference type="InterPro" id="IPR017452">
    <property type="entry name" value="GPCR_Rhodpsn_7TM"/>
</dbReference>
<dbReference type="InterPro" id="IPR047143">
    <property type="entry name" value="GPER1-like"/>
</dbReference>
<dbReference type="PANTHER" id="PTHR24226:SF0">
    <property type="entry name" value="G-PROTEIN COUPLED RECEPTOR 182"/>
    <property type="match status" value="1"/>
</dbReference>
<dbReference type="PANTHER" id="PTHR24226">
    <property type="entry name" value="G-PROTEIN COUPLED RECEPTOR 182 AND ESTROGEN RECEPTOR 1"/>
    <property type="match status" value="1"/>
</dbReference>
<dbReference type="Pfam" id="PF00001">
    <property type="entry name" value="7tm_1"/>
    <property type="match status" value="1"/>
</dbReference>
<dbReference type="PRINTS" id="PR00643">
    <property type="entry name" value="G10DORPHANR"/>
</dbReference>
<dbReference type="PRINTS" id="PR00237">
    <property type="entry name" value="GPCRRHODOPSN"/>
</dbReference>
<dbReference type="SUPFAM" id="SSF81321">
    <property type="entry name" value="Family A G protein-coupled receptor-like"/>
    <property type="match status" value="1"/>
</dbReference>
<dbReference type="PROSITE" id="PS00237">
    <property type="entry name" value="G_PROTEIN_RECEP_F1_1"/>
    <property type="match status" value="1"/>
</dbReference>
<dbReference type="PROSITE" id="PS50262">
    <property type="entry name" value="G_PROTEIN_RECEP_F1_2"/>
    <property type="match status" value="1"/>
</dbReference>
<protein>
    <recommendedName>
        <fullName>G-protein coupled receptor 182</fullName>
    </recommendedName>
    <alternativeName>
        <fullName>G10D</fullName>
    </alternativeName>
    <alternativeName>
        <fullName>NOW</fullName>
    </alternativeName>
</protein>
<feature type="chain" id="PRO_0000069113" description="G-protein coupled receptor 182">
    <location>
        <begin position="1"/>
        <end position="395"/>
    </location>
</feature>
<feature type="topological domain" description="Extracellular" evidence="2">
    <location>
        <begin position="1"/>
        <end position="53"/>
    </location>
</feature>
<feature type="transmembrane region" description="Helical; Name=1" evidence="2">
    <location>
        <begin position="54"/>
        <end position="75"/>
    </location>
</feature>
<feature type="topological domain" description="Cytoplasmic" evidence="2">
    <location>
        <begin position="76"/>
        <end position="86"/>
    </location>
</feature>
<feature type="transmembrane region" description="Helical; Name=2" evidence="2">
    <location>
        <begin position="87"/>
        <end position="109"/>
    </location>
</feature>
<feature type="topological domain" description="Extracellular" evidence="2">
    <location>
        <begin position="110"/>
        <end position="123"/>
    </location>
</feature>
<feature type="transmembrane region" description="Helical; Name=3" evidence="2">
    <location>
        <begin position="124"/>
        <end position="145"/>
    </location>
</feature>
<feature type="topological domain" description="Cytoplasmic" evidence="2">
    <location>
        <begin position="146"/>
        <end position="166"/>
    </location>
</feature>
<feature type="transmembrane region" description="Helical; Name=4" evidence="2">
    <location>
        <begin position="167"/>
        <end position="189"/>
    </location>
</feature>
<feature type="topological domain" description="Extracellular" evidence="2">
    <location>
        <begin position="190"/>
        <end position="213"/>
    </location>
</feature>
<feature type="transmembrane region" description="Helical; Name=5" evidence="2">
    <location>
        <begin position="214"/>
        <end position="235"/>
    </location>
</feature>
<feature type="topological domain" description="Cytoplasmic" evidence="2">
    <location>
        <begin position="236"/>
        <end position="254"/>
    </location>
</feature>
<feature type="transmembrane region" description="Helical; Name=6" evidence="2">
    <location>
        <begin position="255"/>
        <end position="276"/>
    </location>
</feature>
<feature type="topological domain" description="Extracellular" evidence="2">
    <location>
        <begin position="277"/>
        <end position="295"/>
    </location>
</feature>
<feature type="transmembrane region" description="Helical; Name=7" evidence="2">
    <location>
        <begin position="296"/>
        <end position="316"/>
    </location>
</feature>
<feature type="topological domain" description="Cytoplasmic" evidence="2">
    <location>
        <begin position="317"/>
        <end position="395"/>
    </location>
</feature>
<feature type="modified residue" description="Phosphoserine" evidence="1">
    <location>
        <position position="329"/>
    </location>
</feature>
<feature type="glycosylation site" description="N-linked (GlcNAc...) asparagine" evidence="2">
    <location>
        <position position="24"/>
    </location>
</feature>
<feature type="glycosylation site" description="N-linked (GlcNAc...) asparagine" evidence="2">
    <location>
        <position position="33"/>
    </location>
</feature>
<feature type="disulfide bond" evidence="3">
    <location>
        <begin position="122"/>
        <end position="198"/>
    </location>
</feature>
<proteinExistence type="evidence at transcript level"/>
<sequence>MSVIPSPRPVSTLEPDNDFRDIHNWTELLHLFNQTFTDCHIEFNENTKHVVLFVFYLAIFVVGLVENVLVICVNCRRSGRVGMLNLYILNMAIADLGIILSLPVWMLEVMLEYTWLWGSFSCRFIHYFYLVNMYSSIFFLTCLSIDRYVTLTNTSPSWQRHQHRIRRAVCAGVWVLSAIIPLPEVVHIQLLDGSEPMCLFLAPFETYSAWALAVALSATILGFLLPFLLIAVFNILTACRLRRQRQTESRRHCLLMWAYIVVFAICWLPYQVTMLLLTLHGTHIFLHCHLVNLLYFFYEIIDCFSMLHCVANPILYNFLSPSFRGRLLSLVVRYLPKEQARAAGGRASSSSSTQHSIIITKEGSLPLQRISTPTPSETFRRPLRLQTPHLHSAIL</sequence>
<name>GP182_MOUSE</name>
<gene>
    <name type="primary">Gpr182</name>
    <name type="synonym">Admr</name>
    <name type="synonym">Gpcr22</name>
</gene>
<evidence type="ECO:0000250" key="1">
    <source>
        <dbReference type="UniProtKB" id="P31392"/>
    </source>
</evidence>
<evidence type="ECO:0000255" key="2"/>
<evidence type="ECO:0000255" key="3">
    <source>
        <dbReference type="PROSITE-ProRule" id="PRU00521"/>
    </source>
</evidence>
<keyword id="KW-1003">Cell membrane</keyword>
<keyword id="KW-1015">Disulfide bond</keyword>
<keyword id="KW-0297">G-protein coupled receptor</keyword>
<keyword id="KW-0325">Glycoprotein</keyword>
<keyword id="KW-0472">Membrane</keyword>
<keyword id="KW-0597">Phosphoprotein</keyword>
<keyword id="KW-0675">Receptor</keyword>
<keyword id="KW-1185">Reference proteome</keyword>
<keyword id="KW-0807">Transducer</keyword>
<keyword id="KW-0812">Transmembrane</keyword>
<keyword id="KW-1133">Transmembrane helix</keyword>